<protein>
    <recommendedName>
        <fullName evidence="3">Large ribosomal subunit protein uL10</fullName>
    </recommendedName>
    <alternativeName>
        <fullName>60S acidic ribosomal protein P0</fullName>
    </alternativeName>
</protein>
<dbReference type="EMBL" id="L15558">
    <property type="protein sequence ID" value="AAA30236.1"/>
    <property type="molecule type" value="mRNA"/>
</dbReference>
<dbReference type="EMBL" id="X65066">
    <property type="protein sequence ID" value="CAA46199.1"/>
    <property type="molecule type" value="mRNA"/>
</dbReference>
<dbReference type="EMBL" id="X62144">
    <property type="protein sequence ID" value="CAA44070.1"/>
    <property type="molecule type" value="mRNA"/>
</dbReference>
<dbReference type="PIR" id="JH0752">
    <property type="entry name" value="JH0752"/>
</dbReference>
<dbReference type="PIR" id="S22951">
    <property type="entry name" value="R5UTP0"/>
</dbReference>
<dbReference type="RefSeq" id="XP_821117.1">
    <property type="nucleotide sequence ID" value="XM_816024.1"/>
</dbReference>
<dbReference type="SMR" id="P26796"/>
<dbReference type="GeneID" id="3553967"/>
<dbReference type="KEGG" id="tcr:508355.250"/>
<dbReference type="VEuPathDB" id="TriTrypDB:BCY84_14656"/>
<dbReference type="VEuPathDB" id="TriTrypDB:C3747_9g366"/>
<dbReference type="VEuPathDB" id="TriTrypDB:C4B63_2g518"/>
<dbReference type="VEuPathDB" id="TriTrypDB:ECC02_002784"/>
<dbReference type="VEuPathDB" id="TriTrypDB:ECC02_002785"/>
<dbReference type="VEuPathDB" id="TriTrypDB:Tc_MARK_4185"/>
<dbReference type="VEuPathDB" id="TriTrypDB:TcBrA4_0058080"/>
<dbReference type="VEuPathDB" id="TriTrypDB:TcCL_Unassigned05752"/>
<dbReference type="VEuPathDB" id="TriTrypDB:TcCLB.508355.250"/>
<dbReference type="VEuPathDB" id="TriTrypDB:TCDM_04519"/>
<dbReference type="VEuPathDB" id="TriTrypDB:TcG_06175"/>
<dbReference type="VEuPathDB" id="TriTrypDB:TCSYLVIO_005515"/>
<dbReference type="VEuPathDB" id="TriTrypDB:TcYC6_0073360"/>
<dbReference type="OMA" id="MIPAQNT"/>
<dbReference type="OrthoDB" id="246752at2759"/>
<dbReference type="GO" id="GO:0022625">
    <property type="term" value="C:cytosolic large ribosomal subunit"/>
    <property type="evidence" value="ECO:0007669"/>
    <property type="project" value="TreeGrafter"/>
</dbReference>
<dbReference type="GO" id="GO:0070180">
    <property type="term" value="F:large ribosomal subunit rRNA binding"/>
    <property type="evidence" value="ECO:0007669"/>
    <property type="project" value="TreeGrafter"/>
</dbReference>
<dbReference type="GO" id="GO:0003735">
    <property type="term" value="F:structural constituent of ribosome"/>
    <property type="evidence" value="ECO:0007669"/>
    <property type="project" value="TreeGrafter"/>
</dbReference>
<dbReference type="GO" id="GO:0002181">
    <property type="term" value="P:cytoplasmic translation"/>
    <property type="evidence" value="ECO:0007669"/>
    <property type="project" value="TreeGrafter"/>
</dbReference>
<dbReference type="GO" id="GO:0000027">
    <property type="term" value="P:ribosomal large subunit assembly"/>
    <property type="evidence" value="ECO:0007669"/>
    <property type="project" value="TreeGrafter"/>
</dbReference>
<dbReference type="CDD" id="cd05795">
    <property type="entry name" value="Ribosomal_P0_L10e"/>
    <property type="match status" value="1"/>
</dbReference>
<dbReference type="FunFam" id="3.90.105.20:FF:000001">
    <property type="entry name" value="60S acidic ribosomal protein P0"/>
    <property type="match status" value="1"/>
</dbReference>
<dbReference type="FunFam" id="3.30.70.1730:FF:000005">
    <property type="entry name" value="Ribosome assembly factor mrt4"/>
    <property type="match status" value="1"/>
</dbReference>
<dbReference type="Gene3D" id="3.30.70.1730">
    <property type="match status" value="1"/>
</dbReference>
<dbReference type="Gene3D" id="3.90.105.20">
    <property type="match status" value="1"/>
</dbReference>
<dbReference type="InterPro" id="IPR050323">
    <property type="entry name" value="Ribosomal_protein_uL10"/>
</dbReference>
<dbReference type="InterPro" id="IPR001790">
    <property type="entry name" value="Ribosomal_uL10"/>
</dbReference>
<dbReference type="InterPro" id="IPR040637">
    <property type="entry name" value="Ribosomal_uL10-like_insert"/>
</dbReference>
<dbReference type="InterPro" id="IPR043164">
    <property type="entry name" value="Ribosomal_uL10-like_insert_sf"/>
</dbReference>
<dbReference type="InterPro" id="IPR043141">
    <property type="entry name" value="Ribosomal_uL10-like_sf"/>
</dbReference>
<dbReference type="InterPro" id="IPR030670">
    <property type="entry name" value="uL10_eukaryotes"/>
</dbReference>
<dbReference type="PANTHER" id="PTHR45699">
    <property type="entry name" value="60S ACIDIC RIBOSOMAL PROTEIN P0"/>
    <property type="match status" value="1"/>
</dbReference>
<dbReference type="PANTHER" id="PTHR45699:SF3">
    <property type="entry name" value="LARGE RIBOSOMAL SUBUNIT PROTEIN UL10"/>
    <property type="match status" value="1"/>
</dbReference>
<dbReference type="Pfam" id="PF00428">
    <property type="entry name" value="Ribosomal_60s"/>
    <property type="match status" value="1"/>
</dbReference>
<dbReference type="Pfam" id="PF00466">
    <property type="entry name" value="Ribosomal_L10"/>
    <property type="match status" value="1"/>
</dbReference>
<dbReference type="Pfam" id="PF17777">
    <property type="entry name" value="RL10P_insert"/>
    <property type="match status" value="1"/>
</dbReference>
<dbReference type="PIRSF" id="PIRSF039087">
    <property type="entry name" value="L10E"/>
    <property type="match status" value="1"/>
</dbReference>
<dbReference type="SUPFAM" id="SSF160369">
    <property type="entry name" value="Ribosomal protein L10-like"/>
    <property type="match status" value="1"/>
</dbReference>
<organism>
    <name type="scientific">Trypanosoma cruzi</name>
    <dbReference type="NCBI Taxonomy" id="5693"/>
    <lineage>
        <taxon>Eukaryota</taxon>
        <taxon>Discoba</taxon>
        <taxon>Euglenozoa</taxon>
        <taxon>Kinetoplastea</taxon>
        <taxon>Metakinetoplastina</taxon>
        <taxon>Trypanosomatida</taxon>
        <taxon>Trypanosomatidae</taxon>
        <taxon>Trypanosoma</taxon>
        <taxon>Schizotrypanum</taxon>
    </lineage>
</organism>
<evidence type="ECO:0000250" key="1"/>
<evidence type="ECO:0000256" key="2">
    <source>
        <dbReference type="SAM" id="MobiDB-lite"/>
    </source>
</evidence>
<evidence type="ECO:0000305" key="3"/>
<feature type="chain" id="PRO_0000154774" description="Large ribosomal subunit protein uL10">
    <location>
        <begin position="1"/>
        <end position="323"/>
    </location>
</feature>
<feature type="region of interest" description="Disordered" evidence="2">
    <location>
        <begin position="298"/>
        <end position="323"/>
    </location>
</feature>
<feature type="compositionally biased region" description="Acidic residues" evidence="2">
    <location>
        <begin position="307"/>
        <end position="317"/>
    </location>
</feature>
<feature type="sequence conflict" description="In Ref. 2; CAA46199." evidence="3" ref="2">
    <original>IA</original>
    <variation>S</variation>
    <location>
        <begin position="123"/>
        <end position="124"/>
    </location>
</feature>
<feature type="sequence conflict" description="In Ref. 2; CAA46199." evidence="3" ref="2">
    <original>V</original>
    <variation>A</variation>
    <location>
        <position position="170"/>
    </location>
</feature>
<feature type="sequence conflict" description="In Ref. 2; CAA46199." evidence="3" ref="2">
    <original>AAL</original>
    <variation>VV</variation>
    <location>
        <begin position="230"/>
        <end position="232"/>
    </location>
</feature>
<feature type="sequence conflict" description="In Ref. 2; CAA46199." evidence="3" ref="2">
    <original>V</original>
    <variation>A</variation>
    <location>
        <position position="287"/>
    </location>
</feature>
<feature type="sequence conflict" description="In Ref. 3; CAA44070." evidence="3" ref="3">
    <original>A</original>
    <variation>V</variation>
    <location>
        <position position="293"/>
    </location>
</feature>
<feature type="sequence conflict" description="In Ref. 2; CAA46199." evidence="3" ref="2">
    <original>A</original>
    <variation>T</variation>
    <location>
        <position position="294"/>
    </location>
</feature>
<feature type="sequence conflict" description="In Ref. 3; CAA44070." evidence="3" ref="3">
    <original>P</original>
    <variation>F</variation>
    <location>
        <position position="308"/>
    </location>
</feature>
<keyword id="KW-0597">Phosphoprotein</keyword>
<keyword id="KW-0687">Ribonucleoprotein</keyword>
<keyword id="KW-0689">Ribosomal protein</keyword>
<sequence>MPSVSEAKREYEERFNGCLTKYGRVLFCLMDNVRSQQVHDVRRDLRGLGELVMGKKTLQKKIVERRAEDKKASAYDKLLYNTCIEKKLLCGNTALIFTNEEIPVITAVLDKHRVQAPARVGAIAPCDVIVPAGNTGMEPKATSFFQALNIATKIAKGTVEIVSDKKVLSVGDRVDNSTATLLQKLDISPFYYQVEVQSVWDRGMLFLREDLSITDDVVEKYLLEGISNVAALSLGAGIPTAATLPHMIMDAFKTLLGASVATEYEFDEFDGKNLRKAALEGNLGGGVADAAAAADTGAAAAPAAAAEPEEEDDDDDFGMGALF</sequence>
<accession>P26796</accession>
<reference key="1">
    <citation type="journal article" date="1992" name="J. Exp. Med.">
        <title>Cloning and expression of Trypanosoma cruzi ribosomal protein P0 and epitope analysis of anti-P0 autoantibodies in Chagas' disease patients.</title>
        <authorList>
            <person name="Skeiky Y.A."/>
            <person name="Benson D.R."/>
            <person name="Parsons M."/>
            <person name="Elkon K.B."/>
            <person name="Reed S.G."/>
        </authorList>
    </citation>
    <scope>NUCLEOTIDE SEQUENCE [MRNA]</scope>
    <source>
        <strain>Tulahuen / MHOM/CH/00</strain>
    </source>
</reference>
<reference key="2">
    <citation type="journal article" date="1992" name="Nucleic Acids Res.">
        <title>Nucleotide sequence of a cDNA encoding a Trypanosoma cruzi acidic ribosomal PO protein: a novel C-terminal domain in T. cruzi ribosomal P proteins.</title>
        <authorList>
            <person name="Schijman A.G."/>
            <person name="Levin M.J."/>
        </authorList>
    </citation>
    <scope>NUCLEOTIDE SEQUENCE [MRNA]</scope>
    <source>
        <strain>RA</strain>
    </source>
</reference>
<reference key="3">
    <citation type="journal article" date="1992" name="Immunol. Lett.">
        <title>Characterization of the C-terminal region of a Trypanosoma cruzi 38-kDa ribosomal P0 protein that does not react with lupus anti-P autoantibodies.</title>
        <authorList>
            <person name="Schijman A.G."/>
            <person name="Levitus G."/>
            <person name="Levin M.J."/>
        </authorList>
    </citation>
    <scope>NUCLEOTIDE SEQUENCE [MRNA] OF 246-323</scope>
    <source>
        <strain>Tulahuen 2</strain>
    </source>
</reference>
<name>RLA0_TRYCR</name>
<comment type="function">
    <text>Ribosomal protein P0 is the functional equivalent of E.coli protein L10.</text>
</comment>
<comment type="subunit">
    <text>P0 forms a pentameric complex by interaction with dimers of P1 and P2.</text>
</comment>
<comment type="PTM">
    <text evidence="1">Phosphorylated.</text>
</comment>
<comment type="similarity">
    <text evidence="3">Belongs to the universal ribosomal protein uL10 family.</text>
</comment>
<proteinExistence type="evidence at transcript level"/>